<sequence>MKKILVLNGINLNMFGKRDPAHYGTATLEQIDARVAAWGAELGLQIDCFQTNHEGEMVERIHRAHEEGVDALIINAGAWTHYSYGIADALAILKAPVIEVHMSNIHAREEFRHHSVIAGLARGQICGFGVGSYHLALLAASELLNAGQE</sequence>
<name>AROQ_PELPD</name>
<gene>
    <name evidence="1" type="primary">aroQ</name>
    <name type="ordered locus">Ppro_2360</name>
</gene>
<comment type="function">
    <text evidence="1">Catalyzes a trans-dehydration via an enolate intermediate.</text>
</comment>
<comment type="catalytic activity">
    <reaction evidence="1">
        <text>3-dehydroquinate = 3-dehydroshikimate + H2O</text>
        <dbReference type="Rhea" id="RHEA:21096"/>
        <dbReference type="ChEBI" id="CHEBI:15377"/>
        <dbReference type="ChEBI" id="CHEBI:16630"/>
        <dbReference type="ChEBI" id="CHEBI:32364"/>
        <dbReference type="EC" id="4.2.1.10"/>
    </reaction>
</comment>
<comment type="pathway">
    <text evidence="1">Metabolic intermediate biosynthesis; chorismate biosynthesis; chorismate from D-erythrose 4-phosphate and phosphoenolpyruvate: step 3/7.</text>
</comment>
<comment type="subunit">
    <text evidence="1">Homododecamer.</text>
</comment>
<comment type="similarity">
    <text evidence="1">Belongs to the type-II 3-dehydroquinase family.</text>
</comment>
<protein>
    <recommendedName>
        <fullName evidence="1">3-dehydroquinate dehydratase</fullName>
        <shortName evidence="1">3-dehydroquinase</shortName>
        <ecNumber evidence="1">4.2.1.10</ecNumber>
    </recommendedName>
    <alternativeName>
        <fullName evidence="1">Type II DHQase</fullName>
    </alternativeName>
</protein>
<accession>A1ARJ7</accession>
<reference key="1">
    <citation type="submission" date="2006-10" db="EMBL/GenBank/DDBJ databases">
        <title>Complete sequence of chromosome of Pelobacter propionicus DSM 2379.</title>
        <authorList>
            <consortium name="US DOE Joint Genome Institute"/>
            <person name="Copeland A."/>
            <person name="Lucas S."/>
            <person name="Lapidus A."/>
            <person name="Barry K."/>
            <person name="Detter J.C."/>
            <person name="Glavina del Rio T."/>
            <person name="Hammon N."/>
            <person name="Israni S."/>
            <person name="Dalin E."/>
            <person name="Tice H."/>
            <person name="Pitluck S."/>
            <person name="Saunders E."/>
            <person name="Brettin T."/>
            <person name="Bruce D."/>
            <person name="Han C."/>
            <person name="Tapia R."/>
            <person name="Schmutz J."/>
            <person name="Larimer F."/>
            <person name="Land M."/>
            <person name="Hauser L."/>
            <person name="Kyrpides N."/>
            <person name="Kim E."/>
            <person name="Lovley D."/>
            <person name="Richardson P."/>
        </authorList>
    </citation>
    <scope>NUCLEOTIDE SEQUENCE [LARGE SCALE GENOMIC DNA]</scope>
    <source>
        <strain>DSM 2379 / NBRC 103807 / OttBd1</strain>
    </source>
</reference>
<feature type="chain" id="PRO_1000071583" description="3-dehydroquinate dehydratase">
    <location>
        <begin position="1"/>
        <end position="149"/>
    </location>
</feature>
<feature type="active site" description="Proton acceptor" evidence="1">
    <location>
        <position position="23"/>
    </location>
</feature>
<feature type="active site" description="Proton donor" evidence="1">
    <location>
        <position position="101"/>
    </location>
</feature>
<feature type="binding site" evidence="1">
    <location>
        <position position="75"/>
    </location>
    <ligand>
        <name>substrate</name>
    </ligand>
</feature>
<feature type="binding site" evidence="1">
    <location>
        <position position="81"/>
    </location>
    <ligand>
        <name>substrate</name>
    </ligand>
</feature>
<feature type="binding site" evidence="1">
    <location>
        <position position="88"/>
    </location>
    <ligand>
        <name>substrate</name>
    </ligand>
</feature>
<feature type="binding site" evidence="1">
    <location>
        <begin position="102"/>
        <end position="103"/>
    </location>
    <ligand>
        <name>substrate</name>
    </ligand>
</feature>
<feature type="binding site" evidence="1">
    <location>
        <position position="112"/>
    </location>
    <ligand>
        <name>substrate</name>
    </ligand>
</feature>
<feature type="site" description="Transition state stabilizer" evidence="1">
    <location>
        <position position="18"/>
    </location>
</feature>
<proteinExistence type="inferred from homology"/>
<keyword id="KW-0028">Amino-acid biosynthesis</keyword>
<keyword id="KW-0057">Aromatic amino acid biosynthesis</keyword>
<keyword id="KW-0456">Lyase</keyword>
<keyword id="KW-1185">Reference proteome</keyword>
<dbReference type="EC" id="4.2.1.10" evidence="1"/>
<dbReference type="EMBL" id="CP000482">
    <property type="protein sequence ID" value="ABK99967.1"/>
    <property type="molecule type" value="Genomic_DNA"/>
</dbReference>
<dbReference type="RefSeq" id="WP_011736223.1">
    <property type="nucleotide sequence ID" value="NC_008609.1"/>
</dbReference>
<dbReference type="SMR" id="A1ARJ7"/>
<dbReference type="STRING" id="338966.Ppro_2360"/>
<dbReference type="KEGG" id="ppd:Ppro_2360"/>
<dbReference type="eggNOG" id="COG0757">
    <property type="taxonomic scope" value="Bacteria"/>
</dbReference>
<dbReference type="HOGENOM" id="CLU_090968_1_0_7"/>
<dbReference type="OrthoDB" id="9790793at2"/>
<dbReference type="UniPathway" id="UPA00053">
    <property type="reaction ID" value="UER00086"/>
</dbReference>
<dbReference type="Proteomes" id="UP000006732">
    <property type="component" value="Chromosome"/>
</dbReference>
<dbReference type="GO" id="GO:0003855">
    <property type="term" value="F:3-dehydroquinate dehydratase activity"/>
    <property type="evidence" value="ECO:0007669"/>
    <property type="project" value="UniProtKB-UniRule"/>
</dbReference>
<dbReference type="GO" id="GO:0008652">
    <property type="term" value="P:amino acid biosynthetic process"/>
    <property type="evidence" value="ECO:0007669"/>
    <property type="project" value="UniProtKB-KW"/>
</dbReference>
<dbReference type="GO" id="GO:0009073">
    <property type="term" value="P:aromatic amino acid family biosynthetic process"/>
    <property type="evidence" value="ECO:0007669"/>
    <property type="project" value="UniProtKB-KW"/>
</dbReference>
<dbReference type="GO" id="GO:0009423">
    <property type="term" value="P:chorismate biosynthetic process"/>
    <property type="evidence" value="ECO:0007669"/>
    <property type="project" value="UniProtKB-UniRule"/>
</dbReference>
<dbReference type="GO" id="GO:0019631">
    <property type="term" value="P:quinate catabolic process"/>
    <property type="evidence" value="ECO:0007669"/>
    <property type="project" value="TreeGrafter"/>
</dbReference>
<dbReference type="CDD" id="cd00466">
    <property type="entry name" value="DHQase_II"/>
    <property type="match status" value="1"/>
</dbReference>
<dbReference type="Gene3D" id="3.40.50.9100">
    <property type="entry name" value="Dehydroquinase, class II"/>
    <property type="match status" value="1"/>
</dbReference>
<dbReference type="HAMAP" id="MF_00169">
    <property type="entry name" value="AroQ"/>
    <property type="match status" value="1"/>
</dbReference>
<dbReference type="InterPro" id="IPR001874">
    <property type="entry name" value="DHquinase_II"/>
</dbReference>
<dbReference type="InterPro" id="IPR036441">
    <property type="entry name" value="DHquinase_II_sf"/>
</dbReference>
<dbReference type="NCBIfam" id="TIGR01088">
    <property type="entry name" value="aroQ"/>
    <property type="match status" value="1"/>
</dbReference>
<dbReference type="NCBIfam" id="NF003805">
    <property type="entry name" value="PRK05395.1-2"/>
    <property type="match status" value="1"/>
</dbReference>
<dbReference type="NCBIfam" id="NF003806">
    <property type="entry name" value="PRK05395.1-3"/>
    <property type="match status" value="1"/>
</dbReference>
<dbReference type="NCBIfam" id="NF003807">
    <property type="entry name" value="PRK05395.1-4"/>
    <property type="match status" value="1"/>
</dbReference>
<dbReference type="PANTHER" id="PTHR21272">
    <property type="entry name" value="CATABOLIC 3-DEHYDROQUINASE"/>
    <property type="match status" value="1"/>
</dbReference>
<dbReference type="PANTHER" id="PTHR21272:SF3">
    <property type="entry name" value="CATABOLIC 3-DEHYDROQUINASE"/>
    <property type="match status" value="1"/>
</dbReference>
<dbReference type="Pfam" id="PF01220">
    <property type="entry name" value="DHquinase_II"/>
    <property type="match status" value="1"/>
</dbReference>
<dbReference type="PIRSF" id="PIRSF001399">
    <property type="entry name" value="DHquinase_II"/>
    <property type="match status" value="1"/>
</dbReference>
<dbReference type="SUPFAM" id="SSF52304">
    <property type="entry name" value="Type II 3-dehydroquinate dehydratase"/>
    <property type="match status" value="1"/>
</dbReference>
<organism>
    <name type="scientific">Pelobacter propionicus (strain DSM 2379 / NBRC 103807 / OttBd1)</name>
    <dbReference type="NCBI Taxonomy" id="338966"/>
    <lineage>
        <taxon>Bacteria</taxon>
        <taxon>Pseudomonadati</taxon>
        <taxon>Thermodesulfobacteriota</taxon>
        <taxon>Desulfuromonadia</taxon>
        <taxon>Desulfuromonadales</taxon>
        <taxon>Desulfuromonadaceae</taxon>
        <taxon>Pelobacter</taxon>
    </lineage>
</organism>
<evidence type="ECO:0000255" key="1">
    <source>
        <dbReference type="HAMAP-Rule" id="MF_00169"/>
    </source>
</evidence>